<evidence type="ECO:0000255" key="1">
    <source>
        <dbReference type="HAMAP-Rule" id="MF_00358"/>
    </source>
</evidence>
<evidence type="ECO:0000256" key="2">
    <source>
        <dbReference type="SAM" id="MobiDB-lite"/>
    </source>
</evidence>
<evidence type="ECO:0000305" key="3"/>
<name>RS21_PECCP</name>
<proteinExistence type="inferred from homology"/>
<protein>
    <recommendedName>
        <fullName evidence="1">Small ribosomal subunit protein bS21</fullName>
    </recommendedName>
    <alternativeName>
        <fullName evidence="3">30S ribosomal protein S21</fullName>
    </alternativeName>
</protein>
<organism>
    <name type="scientific">Pectobacterium carotovorum subsp. carotovorum (strain PC1)</name>
    <dbReference type="NCBI Taxonomy" id="561230"/>
    <lineage>
        <taxon>Bacteria</taxon>
        <taxon>Pseudomonadati</taxon>
        <taxon>Pseudomonadota</taxon>
        <taxon>Gammaproteobacteria</taxon>
        <taxon>Enterobacterales</taxon>
        <taxon>Pectobacteriaceae</taxon>
        <taxon>Pectobacterium</taxon>
    </lineage>
</organism>
<reference key="1">
    <citation type="submission" date="2009-07" db="EMBL/GenBank/DDBJ databases">
        <title>Complete sequence of Pectobacterium carotovorum subsp. carotovorum PC1.</title>
        <authorList>
            <consortium name="US DOE Joint Genome Institute"/>
            <person name="Lucas S."/>
            <person name="Copeland A."/>
            <person name="Lapidus A."/>
            <person name="Glavina del Rio T."/>
            <person name="Tice H."/>
            <person name="Bruce D."/>
            <person name="Goodwin L."/>
            <person name="Pitluck S."/>
            <person name="Munk A.C."/>
            <person name="Brettin T."/>
            <person name="Detter J.C."/>
            <person name="Han C."/>
            <person name="Tapia R."/>
            <person name="Larimer F."/>
            <person name="Land M."/>
            <person name="Hauser L."/>
            <person name="Kyrpides N."/>
            <person name="Mikhailova N."/>
            <person name="Balakrishnan V."/>
            <person name="Glasner J."/>
            <person name="Perna N.T."/>
        </authorList>
    </citation>
    <scope>NUCLEOTIDE SEQUENCE [LARGE SCALE GENOMIC DNA]</scope>
    <source>
        <strain>PC1</strain>
    </source>
</reference>
<gene>
    <name evidence="1" type="primary">rpsU</name>
    <name type="ordered locus">PC1_0550</name>
</gene>
<dbReference type="EMBL" id="CP001657">
    <property type="protein sequence ID" value="ACT11605.1"/>
    <property type="molecule type" value="Genomic_DNA"/>
</dbReference>
<dbReference type="RefSeq" id="WP_001144069.1">
    <property type="nucleotide sequence ID" value="NC_012917.1"/>
</dbReference>
<dbReference type="SMR" id="C6DKG8"/>
<dbReference type="STRING" id="561230.PC1_0550"/>
<dbReference type="GeneID" id="98390195"/>
<dbReference type="KEGG" id="pct:PC1_0550"/>
<dbReference type="eggNOG" id="COG0828">
    <property type="taxonomic scope" value="Bacteria"/>
</dbReference>
<dbReference type="HOGENOM" id="CLU_159258_1_0_6"/>
<dbReference type="OrthoDB" id="9799244at2"/>
<dbReference type="Proteomes" id="UP000002736">
    <property type="component" value="Chromosome"/>
</dbReference>
<dbReference type="GO" id="GO:1990904">
    <property type="term" value="C:ribonucleoprotein complex"/>
    <property type="evidence" value="ECO:0007669"/>
    <property type="project" value="UniProtKB-KW"/>
</dbReference>
<dbReference type="GO" id="GO:0005840">
    <property type="term" value="C:ribosome"/>
    <property type="evidence" value="ECO:0007669"/>
    <property type="project" value="UniProtKB-KW"/>
</dbReference>
<dbReference type="GO" id="GO:0003735">
    <property type="term" value="F:structural constituent of ribosome"/>
    <property type="evidence" value="ECO:0007669"/>
    <property type="project" value="InterPro"/>
</dbReference>
<dbReference type="GO" id="GO:0006412">
    <property type="term" value="P:translation"/>
    <property type="evidence" value="ECO:0007669"/>
    <property type="project" value="UniProtKB-UniRule"/>
</dbReference>
<dbReference type="FunFam" id="1.20.5.1150:FF:000001">
    <property type="entry name" value="30S ribosomal protein S21"/>
    <property type="match status" value="1"/>
</dbReference>
<dbReference type="Gene3D" id="1.20.5.1150">
    <property type="entry name" value="Ribosomal protein S8"/>
    <property type="match status" value="1"/>
</dbReference>
<dbReference type="HAMAP" id="MF_00358">
    <property type="entry name" value="Ribosomal_bS21"/>
    <property type="match status" value="1"/>
</dbReference>
<dbReference type="InterPro" id="IPR001911">
    <property type="entry name" value="Ribosomal_bS21"/>
</dbReference>
<dbReference type="InterPro" id="IPR018278">
    <property type="entry name" value="Ribosomal_bS21_CS"/>
</dbReference>
<dbReference type="InterPro" id="IPR038380">
    <property type="entry name" value="Ribosomal_bS21_sf"/>
</dbReference>
<dbReference type="NCBIfam" id="TIGR00030">
    <property type="entry name" value="S21p"/>
    <property type="match status" value="1"/>
</dbReference>
<dbReference type="PANTHER" id="PTHR21109">
    <property type="entry name" value="MITOCHONDRIAL 28S RIBOSOMAL PROTEIN S21"/>
    <property type="match status" value="1"/>
</dbReference>
<dbReference type="PANTHER" id="PTHR21109:SF22">
    <property type="entry name" value="SMALL RIBOSOMAL SUBUNIT PROTEIN BS21"/>
    <property type="match status" value="1"/>
</dbReference>
<dbReference type="Pfam" id="PF01165">
    <property type="entry name" value="Ribosomal_S21"/>
    <property type="match status" value="1"/>
</dbReference>
<dbReference type="PRINTS" id="PR00976">
    <property type="entry name" value="RIBOSOMALS21"/>
</dbReference>
<dbReference type="PROSITE" id="PS01181">
    <property type="entry name" value="RIBOSOMAL_S21"/>
    <property type="match status" value="1"/>
</dbReference>
<accession>C6DKG8</accession>
<comment type="similarity">
    <text evidence="1">Belongs to the bacterial ribosomal protein bS21 family.</text>
</comment>
<sequence length="71" mass="8500">MPVIKVRENEPFDVALRRFKRSCEKAGVLAEVRRREFYEKPTTERKRAKASAVKRHAKKLARENARRTRLY</sequence>
<feature type="chain" id="PRO_1000205374" description="Small ribosomal subunit protein bS21">
    <location>
        <begin position="1"/>
        <end position="71"/>
    </location>
</feature>
<feature type="region of interest" description="Disordered" evidence="2">
    <location>
        <begin position="43"/>
        <end position="71"/>
    </location>
</feature>
<feature type="compositionally biased region" description="Basic residues" evidence="2">
    <location>
        <begin position="46"/>
        <end position="59"/>
    </location>
</feature>
<feature type="compositionally biased region" description="Basic and acidic residues" evidence="2">
    <location>
        <begin position="60"/>
        <end position="71"/>
    </location>
</feature>
<keyword id="KW-0687">Ribonucleoprotein</keyword>
<keyword id="KW-0689">Ribosomal protein</keyword>